<gene>
    <name type="primary">p2ox</name>
    <name type="synonym">p2o</name>
</gene>
<organism>
    <name type="scientific">Trametes pubescens</name>
    <name type="common">White-rot fungus</name>
    <dbReference type="NCBI Taxonomy" id="154538"/>
    <lineage>
        <taxon>Eukaryota</taxon>
        <taxon>Fungi</taxon>
        <taxon>Dikarya</taxon>
        <taxon>Basidiomycota</taxon>
        <taxon>Agaricomycotina</taxon>
        <taxon>Agaricomycetes</taxon>
        <taxon>Polyporales</taxon>
        <taxon>Polyporaceae</taxon>
        <taxon>Trametes</taxon>
    </lineage>
</organism>
<dbReference type="EC" id="1.1.3.10"/>
<dbReference type="EMBL" id="AY863215">
    <property type="protein sequence ID" value="AAW57304.1"/>
    <property type="molecule type" value="mRNA"/>
</dbReference>
<dbReference type="SMR" id="Q5G234"/>
<dbReference type="CAZy" id="AA3">
    <property type="family name" value="Auxiliary Activities 3"/>
</dbReference>
<dbReference type="BRENDA" id="1.1.3.10">
    <property type="organism ID" value="6420"/>
</dbReference>
<dbReference type="GO" id="GO:0042597">
    <property type="term" value="C:periplasmic space"/>
    <property type="evidence" value="ECO:0007669"/>
    <property type="project" value="UniProtKB-SubCell"/>
</dbReference>
<dbReference type="GO" id="GO:0050660">
    <property type="term" value="F:flavin adenine dinucleotide binding"/>
    <property type="evidence" value="ECO:0007669"/>
    <property type="project" value="InterPro"/>
</dbReference>
<dbReference type="GO" id="GO:0050233">
    <property type="term" value="F:pyranose oxidase activity"/>
    <property type="evidence" value="ECO:0007669"/>
    <property type="project" value="UniProtKB-EC"/>
</dbReference>
<dbReference type="Gene3D" id="3.30.1920.50">
    <property type="match status" value="1"/>
</dbReference>
<dbReference type="Gene3D" id="3.50.50.60">
    <property type="entry name" value="FAD/NAD(P)-binding domain"/>
    <property type="match status" value="2"/>
</dbReference>
<dbReference type="InterPro" id="IPR036188">
    <property type="entry name" value="FAD/NAD-bd_sf"/>
</dbReference>
<dbReference type="InterPro" id="IPR007867">
    <property type="entry name" value="GMC_OxRtase_C"/>
</dbReference>
<dbReference type="InterPro" id="IPR012814">
    <property type="entry name" value="P2OX"/>
</dbReference>
<dbReference type="InterPro" id="IPR051473">
    <property type="entry name" value="P2Ox-like"/>
</dbReference>
<dbReference type="NCBIfam" id="TIGR02462">
    <property type="entry name" value="pyranose_ox"/>
    <property type="match status" value="1"/>
</dbReference>
<dbReference type="PANTHER" id="PTHR42784">
    <property type="entry name" value="PYRANOSE 2-OXIDASE"/>
    <property type="match status" value="1"/>
</dbReference>
<dbReference type="PANTHER" id="PTHR42784:SF1">
    <property type="entry name" value="PYRANOSE 2-OXIDASE"/>
    <property type="match status" value="1"/>
</dbReference>
<dbReference type="Pfam" id="PF05199">
    <property type="entry name" value="GMC_oxred_C"/>
    <property type="match status" value="1"/>
</dbReference>
<dbReference type="SUPFAM" id="SSF54373">
    <property type="entry name" value="FAD-linked reductases, C-terminal domain"/>
    <property type="match status" value="1"/>
</dbReference>
<dbReference type="SUPFAM" id="SSF51905">
    <property type="entry name" value="FAD/NAD(P)-binding domain"/>
    <property type="match status" value="1"/>
</dbReference>
<proteinExistence type="evidence at protein level"/>
<keyword id="KW-0274">FAD</keyword>
<keyword id="KW-0285">Flavoprotein</keyword>
<keyword id="KW-0560">Oxidoreductase</keyword>
<keyword id="KW-0574">Periplasm</keyword>
<keyword id="KW-0732">Signal</keyword>
<feature type="signal peptide" evidence="1">
    <location>
        <begin position="1"/>
        <end position="28"/>
    </location>
</feature>
<feature type="propeptide" id="PRO_0000012354" evidence="1">
    <location>
        <begin position="29"/>
        <end position="38"/>
    </location>
</feature>
<feature type="chain" id="PRO_0000012355" description="Pyranose 2-oxidase" evidence="1">
    <location>
        <begin position="39"/>
        <end position="622"/>
    </location>
</feature>
<feature type="active site" description="Proton acceptor" evidence="2">
    <location>
        <position position="548"/>
    </location>
</feature>
<feature type="active site" evidence="1">
    <location>
        <position position="593"/>
    </location>
</feature>
<feature type="binding site" evidence="1">
    <location>
        <position position="448"/>
    </location>
    <ligand>
        <name>substrate</name>
    </ligand>
</feature>
<feature type="binding site" evidence="1">
    <location>
        <position position="450"/>
    </location>
    <ligand>
        <name>substrate</name>
    </ligand>
</feature>
<feature type="modified residue" description="Tele-8alpha-FAD histidine" evidence="1">
    <location>
        <position position="167"/>
    </location>
</feature>
<evidence type="ECO:0000250" key="1"/>
<evidence type="ECO:0000250" key="2">
    <source>
        <dbReference type="UniProtKB" id="E4QP00"/>
    </source>
</evidence>
<evidence type="ECO:0000269" key="3">
    <source>
    </source>
</evidence>
<evidence type="ECO:0000305" key="4"/>
<accession>Q5G234</accession>
<name>P2OX_TRAPU</name>
<sequence>MSTSSSDPFYNFAKTSFKSAAAQKASATSLPPLPGPDQKVPGMDIKYDVVIVGSGPIGCTYARELVEAGYKVAMFDIGEIDSGLKIGAHKKNTVEYQKNIDKFVNVIQGQLMSVSVPVNKLVVDTLSPTSWQASTFFVRNGSNPEQDPLRNLSGQAVTRVVGGMSTHWTCATPRFDREQRPLLVKDDPDADDAIWDQLYTKAESYFKTGTDQFNESIRHNLVLNKLAEEYKGQRTFQQIPLAATRRNPTFVEWSSANTVFDLQNRPNIDAPEERFNLFPAVACERVMRNASNTAIESLHIRDLISGDRFAIQADVYVLTAGAVHNTQLLVNSGFGKLGRPDPANPPELLPFLGSYITEQSLVFCQTVMSTELIDSVKSDMTIIGNPGELGYSVSYMPGASTNKHPDWWNEKVQNHMMQHQEDPLPIPFEDPEPQVTTLFQPSHPWHTQIHRDAFSYGAVQQSIDSRLIVDWRFFGRTEPKEENKLWFSDKITDAYNMPQPTFDFRFPAGRTSQEAEDMMTDMCVMSAKIGGFLPGSLPQFMEPGLVLHLGGTHRMGFDEQEDNCCVDTDSRVFGFNNLFLGGCGNIPTAYGANPTLTAMSLAIKSCEYIKKNFTPSPFTPAQ</sequence>
<reference key="1">
    <citation type="journal article" date="2005" name="J. Biotechnol.">
        <title>Expression of the pyranose 2-oxidase from Trametes pubescens in Escherichia coli and characterization of the recombinant enzyme.</title>
        <authorList>
            <person name="Maresova H."/>
            <person name="Vecerek B."/>
            <person name="Hradska M."/>
            <person name="Libessart N."/>
            <person name="Becka S."/>
            <person name="Saniez M.-H."/>
            <person name="Kyslik P."/>
        </authorList>
    </citation>
    <scope>NUCLEOTIDE SEQUENCE [MRNA]</scope>
    <scope>FUNCTION</scope>
    <scope>BIOPHYSICOCHEMICAL PROPERTIES</scope>
    <source>
        <strain>CBS 696.94</strain>
    </source>
</reference>
<comment type="function">
    <text evidence="1 3">Catalyzes the oxidation of various aldopyranoses and disaccharides on carbon-2 to the corresponding 2-keto sugars concomitant with the reduction of O(2) to H(2)O(2). Plays an important role in lignin degradation of wood rot fungi by supplying the essential cosubstrate H(2)O(2) for the ligninolytic peroxidases, lignin peroxidase and manganese-dependent peroxidase (By similarity).</text>
</comment>
<comment type="catalytic activity">
    <reaction>
        <text>D-glucose + O2 = 2-dehydro-D-glucose + H2O2</text>
        <dbReference type="Rhea" id="RHEA:10552"/>
        <dbReference type="ChEBI" id="CHEBI:4167"/>
        <dbReference type="ChEBI" id="CHEBI:15379"/>
        <dbReference type="ChEBI" id="CHEBI:16240"/>
        <dbReference type="ChEBI" id="CHEBI:16609"/>
        <dbReference type="EC" id="1.1.3.10"/>
    </reaction>
</comment>
<comment type="cofactor">
    <cofactor evidence="1">
        <name>FAD</name>
        <dbReference type="ChEBI" id="CHEBI:57692"/>
    </cofactor>
    <text evidence="1">Binds 1 FAD covalently per subunit.</text>
</comment>
<comment type="biophysicochemical properties">
    <kinetics>
        <KM evidence="3">133 mM for L-arabinose (at pH 6.5 and 30 degrees Celsius)</KM>
        <KM evidence="3">9.91 mM for D-galactose (at pH 6.5 and 30 degrees Celsius)</KM>
        <KM evidence="3">1.31 mM for D-glucose (at pH 6.5 and 30 degrees Celsius)</KM>
        <KM evidence="3">157 mM for melibiose (at pH 6.5 and 30 degrees Celsius)</KM>
        <KM evidence="3">123 mM for ribose (at pH 6.5 and 30 degrees Celsius)</KM>
        <KM evidence="3">75.4 mM for L-sorbose (at pH 6.5 and 30 degrees Celsius)</KM>
        <KM evidence="3">36.2 mM for D-xylose (at pH 6.5 and 30 degrees Celsius)</KM>
        <Vmax evidence="3">0.08 umol/min/mg enzyme toward L-arabinose (at pH 6.5 and 30 degrees Celsius)</Vmax>
        <Vmax evidence="3">1.52 umol/min/mg enzyme toward D-galactose (at pH 6.5 and 30 degrees Celsius)</Vmax>
        <Vmax evidence="3">9.32 umol/min/mg enzyme toward D-glucose (at pH 6.5 and 30 degrees Celsius)</Vmax>
        <Vmax evidence="3">1.3 umol/min/mg enzyme toward melibiose (at pH 6.5 and 30 degrees Celsius)</Vmax>
        <Vmax evidence="3">0.01 umol/min/mg enzyme toward ribose (at pH 6.5 and 30 degrees Celsius)</Vmax>
        <Vmax evidence="3">12.5 umol/min/mg enzyme toward L-sorbose (at pH 6.5 and 30 degrees Celsius)</Vmax>
        <Vmax evidence="3">4.02 umol/min/mg enzyme toward D-xylose (at pH 6.5 and 30 degrees Celsius)</Vmax>
    </kinetics>
    <phDependence>
        <text evidence="3">Optimum pH is 5.5-6.5.</text>
    </phDependence>
</comment>
<comment type="subunit">
    <text evidence="1">Homotetramer.</text>
</comment>
<comment type="subcellular location">
    <subcellularLocation>
        <location evidence="1">Periplasm</location>
    </subcellularLocation>
    <text evidence="1">Hyphal periplasmic space.</text>
</comment>
<comment type="similarity">
    <text evidence="4">Belongs to the GMC oxidoreductase family.</text>
</comment>
<protein>
    <recommendedName>
        <fullName>Pyranose 2-oxidase</fullName>
        <shortName>P2Ox</shortName>
        <shortName>POD</shortName>
        <shortName>POx</shortName>
        <shortName>PROD</shortName>
        <shortName>Pyranose oxidase</shortName>
        <ecNumber>1.1.3.10</ecNumber>
    </recommendedName>
    <alternativeName>
        <fullName>FAD-oxidoreductase</fullName>
    </alternativeName>
    <alternativeName>
        <fullName>Glucose 2-oxidase</fullName>
    </alternativeName>
    <alternativeName>
        <fullName>Pyranose:oxygen 2-oxidoreductase</fullName>
    </alternativeName>
</protein>